<name>FDHE_PSEAE</name>
<feature type="chain" id="PRO_0000189645" description="Protein FdhE homolog">
    <location>
        <begin position="1"/>
        <end position="309"/>
    </location>
</feature>
<feature type="helix" evidence="2">
    <location>
        <begin position="28"/>
        <end position="40"/>
    </location>
</feature>
<feature type="helix" evidence="2">
    <location>
        <begin position="46"/>
        <end position="63"/>
    </location>
</feature>
<feature type="helix" evidence="2">
    <location>
        <begin position="74"/>
        <end position="82"/>
    </location>
</feature>
<feature type="helix" evidence="2">
    <location>
        <begin position="90"/>
        <end position="96"/>
    </location>
</feature>
<feature type="helix" evidence="2">
    <location>
        <begin position="100"/>
        <end position="108"/>
    </location>
</feature>
<feature type="helix" evidence="2">
    <location>
        <begin position="116"/>
        <end position="127"/>
    </location>
</feature>
<feature type="helix" evidence="2">
    <location>
        <begin position="130"/>
        <end position="141"/>
    </location>
</feature>
<feature type="helix" evidence="2">
    <location>
        <begin position="145"/>
        <end position="147"/>
    </location>
</feature>
<feature type="helix" evidence="2">
    <location>
        <begin position="150"/>
        <end position="152"/>
    </location>
</feature>
<feature type="helix" evidence="2">
    <location>
        <begin position="153"/>
        <end position="169"/>
    </location>
</feature>
<feature type="turn" evidence="2">
    <location>
        <begin position="186"/>
        <end position="188"/>
    </location>
</feature>
<feature type="strand" evidence="2">
    <location>
        <begin position="192"/>
        <end position="198"/>
    </location>
</feature>
<feature type="strand" evidence="2">
    <location>
        <begin position="206"/>
        <end position="211"/>
    </location>
</feature>
<feature type="turn" evidence="2">
    <location>
        <begin position="212"/>
        <end position="214"/>
    </location>
</feature>
<feature type="strand" evidence="2">
    <location>
        <begin position="217"/>
        <end position="219"/>
    </location>
</feature>
<feature type="strand" evidence="2">
    <location>
        <begin position="226"/>
        <end position="228"/>
    </location>
</feature>
<feature type="strand" evidence="2">
    <location>
        <begin position="235"/>
        <end position="237"/>
    </location>
</feature>
<feature type="strand" evidence="2">
    <location>
        <begin position="250"/>
        <end position="256"/>
    </location>
</feature>
<feature type="turn" evidence="2">
    <location>
        <begin position="257"/>
        <end position="260"/>
    </location>
</feature>
<feature type="strand" evidence="2">
    <location>
        <begin position="261"/>
        <end position="267"/>
    </location>
</feature>
<feature type="turn" evidence="2">
    <location>
        <begin position="268"/>
        <end position="270"/>
    </location>
</feature>
<feature type="helix" evidence="2">
    <location>
        <begin position="276"/>
        <end position="281"/>
    </location>
</feature>
<feature type="helix" evidence="2">
    <location>
        <begin position="284"/>
        <end position="292"/>
    </location>
</feature>
<accession>Q9HV00</accession>
<evidence type="ECO:0000255" key="1">
    <source>
        <dbReference type="HAMAP-Rule" id="MF_00611"/>
    </source>
</evidence>
<evidence type="ECO:0007829" key="2">
    <source>
        <dbReference type="PDB" id="2FIY"/>
    </source>
</evidence>
<reference key="1">
    <citation type="journal article" date="2000" name="Nature">
        <title>Complete genome sequence of Pseudomonas aeruginosa PAO1, an opportunistic pathogen.</title>
        <authorList>
            <person name="Stover C.K."/>
            <person name="Pham X.-Q.T."/>
            <person name="Erwin A.L."/>
            <person name="Mizoguchi S.D."/>
            <person name="Warrener P."/>
            <person name="Hickey M.J."/>
            <person name="Brinkman F.S.L."/>
            <person name="Hufnagle W.O."/>
            <person name="Kowalik D.J."/>
            <person name="Lagrou M."/>
            <person name="Garber R.L."/>
            <person name="Goltry L."/>
            <person name="Tolentino E."/>
            <person name="Westbrock-Wadman S."/>
            <person name="Yuan Y."/>
            <person name="Brody L.L."/>
            <person name="Coulter S.N."/>
            <person name="Folger K.R."/>
            <person name="Kas A."/>
            <person name="Larbig K."/>
            <person name="Lim R.M."/>
            <person name="Smith K.A."/>
            <person name="Spencer D.H."/>
            <person name="Wong G.K.-S."/>
            <person name="Wu Z."/>
            <person name="Paulsen I.T."/>
            <person name="Reizer J."/>
            <person name="Saier M.H. Jr."/>
            <person name="Hancock R.E.W."/>
            <person name="Lory S."/>
            <person name="Olson M.V."/>
        </authorList>
    </citation>
    <scope>NUCLEOTIDE SEQUENCE [LARGE SCALE GENOMIC DNA]</scope>
    <source>
        <strain>ATCC 15692 / DSM 22644 / CIP 104116 / JCM 14847 / LMG 12228 / 1C / PRS 101 / PAO1</strain>
    </source>
</reference>
<comment type="function">
    <text evidence="1">Necessary for formate dehydrogenase activity.</text>
</comment>
<comment type="subcellular location">
    <subcellularLocation>
        <location evidence="1">Cytoplasm</location>
    </subcellularLocation>
</comment>
<comment type="similarity">
    <text evidence="1">Belongs to the FdhE family.</text>
</comment>
<dbReference type="EMBL" id="AE004091">
    <property type="protein sequence ID" value="AAG08195.1"/>
    <property type="molecule type" value="Genomic_DNA"/>
</dbReference>
<dbReference type="PIR" id="D83044">
    <property type="entry name" value="D83044"/>
</dbReference>
<dbReference type="RefSeq" id="NP_253497.1">
    <property type="nucleotide sequence ID" value="NC_002516.2"/>
</dbReference>
<dbReference type="RefSeq" id="WP_003112347.1">
    <property type="nucleotide sequence ID" value="NZ_QZGE01000002.1"/>
</dbReference>
<dbReference type="PDB" id="2FIY">
    <property type="method" value="X-ray"/>
    <property type="resolution" value="2.10 A"/>
    <property type="chains" value="A/B=1-309"/>
</dbReference>
<dbReference type="PDBsum" id="2FIY"/>
<dbReference type="SMR" id="Q9HV00"/>
<dbReference type="FunCoup" id="Q9HV00">
    <property type="interactions" value="65"/>
</dbReference>
<dbReference type="STRING" id="208964.PA4809"/>
<dbReference type="PaxDb" id="208964-PA4809"/>
<dbReference type="GeneID" id="880170"/>
<dbReference type="KEGG" id="pae:PA4809"/>
<dbReference type="PATRIC" id="fig|208964.12.peg.5038"/>
<dbReference type="PseudoCAP" id="PA4809"/>
<dbReference type="HOGENOM" id="CLU_055275_0_0_6"/>
<dbReference type="InParanoid" id="Q9HV00"/>
<dbReference type="OrthoDB" id="9794151at2"/>
<dbReference type="PhylomeDB" id="Q9HV00"/>
<dbReference type="BioCyc" id="PAER208964:G1FZ6-4923-MONOMER"/>
<dbReference type="EvolutionaryTrace" id="Q9HV00"/>
<dbReference type="Proteomes" id="UP000002438">
    <property type="component" value="Chromosome"/>
</dbReference>
<dbReference type="GO" id="GO:0005829">
    <property type="term" value="C:cytosol"/>
    <property type="evidence" value="ECO:0000318"/>
    <property type="project" value="GO_Central"/>
</dbReference>
<dbReference type="GO" id="GO:0008199">
    <property type="term" value="F:ferric iron binding"/>
    <property type="evidence" value="ECO:0000318"/>
    <property type="project" value="GO_Central"/>
</dbReference>
<dbReference type="GO" id="GO:0051604">
    <property type="term" value="P:protein maturation"/>
    <property type="evidence" value="ECO:0000318"/>
    <property type="project" value="GO_Central"/>
</dbReference>
<dbReference type="CDD" id="cd16341">
    <property type="entry name" value="FdhE"/>
    <property type="match status" value="1"/>
</dbReference>
<dbReference type="FunFam" id="3.90.1670.10:FF:000001">
    <property type="entry name" value="Protein FdhE"/>
    <property type="match status" value="1"/>
</dbReference>
<dbReference type="Gene3D" id="3.90.1670.10">
    <property type="entry name" value="FdhE-like domain"/>
    <property type="match status" value="1"/>
</dbReference>
<dbReference type="HAMAP" id="MF_00611">
    <property type="entry name" value="FdeH"/>
    <property type="match status" value="1"/>
</dbReference>
<dbReference type="InterPro" id="IPR024064">
    <property type="entry name" value="FdhE-like_sf"/>
</dbReference>
<dbReference type="InterPro" id="IPR056796">
    <property type="entry name" value="FdhE_C"/>
</dbReference>
<dbReference type="InterPro" id="IPR056797">
    <property type="entry name" value="FdhE_central"/>
</dbReference>
<dbReference type="InterPro" id="IPR056774">
    <property type="entry name" value="FdhE_N"/>
</dbReference>
<dbReference type="InterPro" id="IPR006452">
    <property type="entry name" value="Formate_DH_accessory"/>
</dbReference>
<dbReference type="NCBIfam" id="TIGR01562">
    <property type="entry name" value="FdhE"/>
    <property type="match status" value="1"/>
</dbReference>
<dbReference type="PANTHER" id="PTHR37689">
    <property type="entry name" value="PROTEIN FDHE"/>
    <property type="match status" value="1"/>
</dbReference>
<dbReference type="PANTHER" id="PTHR37689:SF1">
    <property type="entry name" value="PROTEIN FDHE"/>
    <property type="match status" value="1"/>
</dbReference>
<dbReference type="Pfam" id="PF24860">
    <property type="entry name" value="FdhE_C"/>
    <property type="match status" value="1"/>
</dbReference>
<dbReference type="Pfam" id="PF24859">
    <property type="entry name" value="FdhE_central"/>
    <property type="match status" value="1"/>
</dbReference>
<dbReference type="Pfam" id="PF04216">
    <property type="entry name" value="FdhE_N"/>
    <property type="match status" value="1"/>
</dbReference>
<dbReference type="PIRSF" id="PIRSF018296">
    <property type="entry name" value="Format_dh_formtn"/>
    <property type="match status" value="1"/>
</dbReference>
<dbReference type="SUPFAM" id="SSF144020">
    <property type="entry name" value="FdhE-like"/>
    <property type="match status" value="1"/>
</dbReference>
<keyword id="KW-0002">3D-structure</keyword>
<keyword id="KW-0963">Cytoplasm</keyword>
<keyword id="KW-1185">Reference proteome</keyword>
<gene>
    <name evidence="1" type="primary">fdhE</name>
    <name type="ordered locus">PA4809</name>
</gene>
<protein>
    <recommendedName>
        <fullName evidence="1">Protein FdhE homolog</fullName>
    </recommendedName>
</protein>
<organism>
    <name type="scientific">Pseudomonas aeruginosa (strain ATCC 15692 / DSM 22644 / CIP 104116 / JCM 14847 / LMG 12228 / 1C / PRS 101 / PAO1)</name>
    <dbReference type="NCBI Taxonomy" id="208964"/>
    <lineage>
        <taxon>Bacteria</taxon>
        <taxon>Pseudomonadati</taxon>
        <taxon>Pseudomonadota</taxon>
        <taxon>Gammaproteobacteria</taxon>
        <taxon>Pseudomonadales</taxon>
        <taxon>Pseudomonadaceae</taxon>
        <taxon>Pseudomonas</taxon>
    </lineage>
</organism>
<sequence>MSRTILQPGQIEAAANIPPHLHQPSRDLFARRGERLLQLAEGHPMGDYLRLVAGLCRLQQALLDNPPALAPLDPERLRKSREHGMPPLAYDLLVREGAWLPWLDALLAGYPAPANAAVGAALEQLREAEEGQRKAWAIALLSGQFDLLPAALVPFLGAALQVAWSHWLLGLEEGAVVETESRTLCPACGSPPMAGMIRQGGKETGLRYLSCSLCACEWHYVRIKCSHCEESKHLAYLSLEHDGQPAEKAVLRAETCPSCQGYLKQFYLEFDRHADALADDLASLALDMRLAEDGYLRRSPNLLLAPGGE</sequence>
<proteinExistence type="evidence at protein level"/>